<sequence length="253" mass="26900">MRILLSNDDGVHAPGIQTLAKALREFADVQVVAPDRNRSGASNSLTLESSLRTFTFENGDIAVQMGTPTDCVYLGVNALMRPRPDIVVSGINAGPNLGDDVIYSGTVAAAMEGRHLGFPALAVSLDGHKHYDTAAAVTCSILRALCKEPLRTGRILNINVPDLPLDQIKGIRVTRCGTRHPADQVIPQQDPRGNTLYWIGPPGGKCDAGPGTDFAAVDEGYVSITPLHVDLTAHSAQDVVSDWLNSVGVGTQW</sequence>
<organism>
    <name type="scientific">Escherichia coli O157:H7 (strain EC4115 / EHEC)</name>
    <dbReference type="NCBI Taxonomy" id="444450"/>
    <lineage>
        <taxon>Bacteria</taxon>
        <taxon>Pseudomonadati</taxon>
        <taxon>Pseudomonadota</taxon>
        <taxon>Gammaproteobacteria</taxon>
        <taxon>Enterobacterales</taxon>
        <taxon>Enterobacteriaceae</taxon>
        <taxon>Escherichia</taxon>
    </lineage>
</organism>
<protein>
    <recommendedName>
        <fullName evidence="1">5'/3'-nucleotidase SurE</fullName>
        <ecNumber evidence="1">3.1.3.5</ecNumber>
        <ecNumber evidence="1">3.1.3.6</ecNumber>
    </recommendedName>
    <alternativeName>
        <fullName evidence="1">Exopolyphosphatase</fullName>
        <ecNumber evidence="1">3.6.1.11</ecNumber>
    </alternativeName>
    <alternativeName>
        <fullName evidence="1">Nucleoside monophosphate phosphohydrolase</fullName>
    </alternativeName>
</protein>
<reference key="1">
    <citation type="journal article" date="2011" name="Proc. Natl. Acad. Sci. U.S.A.">
        <title>Genomic anatomy of Escherichia coli O157:H7 outbreaks.</title>
        <authorList>
            <person name="Eppinger M."/>
            <person name="Mammel M.K."/>
            <person name="Leclerc J.E."/>
            <person name="Ravel J."/>
            <person name="Cebula T.A."/>
        </authorList>
    </citation>
    <scope>NUCLEOTIDE SEQUENCE [LARGE SCALE GENOMIC DNA]</scope>
    <source>
        <strain>EC4115 / EHEC</strain>
    </source>
</reference>
<dbReference type="EC" id="3.1.3.5" evidence="1"/>
<dbReference type="EC" id="3.1.3.6" evidence="1"/>
<dbReference type="EC" id="3.6.1.11" evidence="1"/>
<dbReference type="EMBL" id="CP001164">
    <property type="protein sequence ID" value="ACI37348.1"/>
    <property type="molecule type" value="Genomic_DNA"/>
</dbReference>
<dbReference type="RefSeq" id="WP_001295182.1">
    <property type="nucleotide sequence ID" value="NC_011353.1"/>
</dbReference>
<dbReference type="SMR" id="B5Z3A6"/>
<dbReference type="GeneID" id="93779262"/>
<dbReference type="KEGG" id="ecf:ECH74115_3995"/>
<dbReference type="HOGENOM" id="CLU_045192_1_2_6"/>
<dbReference type="GO" id="GO:0005737">
    <property type="term" value="C:cytoplasm"/>
    <property type="evidence" value="ECO:0007669"/>
    <property type="project" value="UniProtKB-SubCell"/>
</dbReference>
<dbReference type="GO" id="GO:0008254">
    <property type="term" value="F:3'-nucleotidase activity"/>
    <property type="evidence" value="ECO:0007669"/>
    <property type="project" value="UniProtKB-UniRule"/>
</dbReference>
<dbReference type="GO" id="GO:0008253">
    <property type="term" value="F:5'-nucleotidase activity"/>
    <property type="evidence" value="ECO:0007669"/>
    <property type="project" value="UniProtKB-UniRule"/>
</dbReference>
<dbReference type="GO" id="GO:0004309">
    <property type="term" value="F:exopolyphosphatase activity"/>
    <property type="evidence" value="ECO:0007669"/>
    <property type="project" value="UniProtKB-UniRule"/>
</dbReference>
<dbReference type="GO" id="GO:0046872">
    <property type="term" value="F:metal ion binding"/>
    <property type="evidence" value="ECO:0007669"/>
    <property type="project" value="UniProtKB-UniRule"/>
</dbReference>
<dbReference type="GO" id="GO:0000166">
    <property type="term" value="F:nucleotide binding"/>
    <property type="evidence" value="ECO:0007669"/>
    <property type="project" value="UniProtKB-KW"/>
</dbReference>
<dbReference type="FunFam" id="3.40.1210.10:FF:000001">
    <property type="entry name" value="5'/3'-nucleotidase SurE"/>
    <property type="match status" value="1"/>
</dbReference>
<dbReference type="Gene3D" id="3.40.1210.10">
    <property type="entry name" value="Survival protein SurE-like phosphatase/nucleotidase"/>
    <property type="match status" value="1"/>
</dbReference>
<dbReference type="HAMAP" id="MF_00060">
    <property type="entry name" value="SurE"/>
    <property type="match status" value="1"/>
</dbReference>
<dbReference type="InterPro" id="IPR030048">
    <property type="entry name" value="SurE"/>
</dbReference>
<dbReference type="InterPro" id="IPR002828">
    <property type="entry name" value="SurE-like_Pase/nucleotidase"/>
</dbReference>
<dbReference type="InterPro" id="IPR036523">
    <property type="entry name" value="SurE-like_sf"/>
</dbReference>
<dbReference type="NCBIfam" id="NF001488">
    <property type="entry name" value="PRK00346.1-1"/>
    <property type="match status" value="1"/>
</dbReference>
<dbReference type="NCBIfam" id="NF001489">
    <property type="entry name" value="PRK00346.1-3"/>
    <property type="match status" value="1"/>
</dbReference>
<dbReference type="NCBIfam" id="NF001490">
    <property type="entry name" value="PRK00346.1-4"/>
    <property type="match status" value="1"/>
</dbReference>
<dbReference type="NCBIfam" id="TIGR00087">
    <property type="entry name" value="surE"/>
    <property type="match status" value="1"/>
</dbReference>
<dbReference type="PANTHER" id="PTHR30457">
    <property type="entry name" value="5'-NUCLEOTIDASE SURE"/>
    <property type="match status" value="1"/>
</dbReference>
<dbReference type="PANTHER" id="PTHR30457:SF12">
    <property type="entry name" value="5'_3'-NUCLEOTIDASE SURE"/>
    <property type="match status" value="1"/>
</dbReference>
<dbReference type="Pfam" id="PF01975">
    <property type="entry name" value="SurE"/>
    <property type="match status" value="1"/>
</dbReference>
<dbReference type="SUPFAM" id="SSF64167">
    <property type="entry name" value="SurE-like"/>
    <property type="match status" value="1"/>
</dbReference>
<comment type="function">
    <text evidence="1">Nucleotidase with a broad substrate specificity as it can dephosphorylate various ribo- and deoxyribonucleoside 5'-monophosphates and ribonucleoside 3'-monophosphates with highest affinity to 3'-AMP. Also hydrolyzes polyphosphate (exopolyphosphatase activity) with the preference for short-chain-length substrates (P20-25). Might be involved in the regulation of dNTP and NTP pools, and in the turnover of 3'-mononucleotides produced by numerous intracellular RNases (T1, T2, and F) during the degradation of various RNAs.</text>
</comment>
<comment type="catalytic activity">
    <reaction evidence="1">
        <text>a ribonucleoside 5'-phosphate + H2O = a ribonucleoside + phosphate</text>
        <dbReference type="Rhea" id="RHEA:12484"/>
        <dbReference type="ChEBI" id="CHEBI:15377"/>
        <dbReference type="ChEBI" id="CHEBI:18254"/>
        <dbReference type="ChEBI" id="CHEBI:43474"/>
        <dbReference type="ChEBI" id="CHEBI:58043"/>
        <dbReference type="EC" id="3.1.3.5"/>
    </reaction>
</comment>
<comment type="catalytic activity">
    <reaction evidence="1">
        <text>a ribonucleoside 3'-phosphate + H2O = a ribonucleoside + phosphate</text>
        <dbReference type="Rhea" id="RHEA:10144"/>
        <dbReference type="ChEBI" id="CHEBI:13197"/>
        <dbReference type="ChEBI" id="CHEBI:15377"/>
        <dbReference type="ChEBI" id="CHEBI:18254"/>
        <dbReference type="ChEBI" id="CHEBI:43474"/>
        <dbReference type="EC" id="3.1.3.6"/>
    </reaction>
</comment>
<comment type="catalytic activity">
    <reaction evidence="1">
        <text>[phosphate](n) + H2O = [phosphate](n-1) + phosphate + H(+)</text>
        <dbReference type="Rhea" id="RHEA:21528"/>
        <dbReference type="Rhea" id="RHEA-COMP:9859"/>
        <dbReference type="Rhea" id="RHEA-COMP:14279"/>
        <dbReference type="ChEBI" id="CHEBI:15377"/>
        <dbReference type="ChEBI" id="CHEBI:15378"/>
        <dbReference type="ChEBI" id="CHEBI:16838"/>
        <dbReference type="ChEBI" id="CHEBI:43474"/>
        <dbReference type="EC" id="3.6.1.11"/>
    </reaction>
</comment>
<comment type="cofactor">
    <cofactor evidence="1">
        <name>a divalent metal cation</name>
        <dbReference type="ChEBI" id="CHEBI:60240"/>
    </cofactor>
    <text evidence="1">Binds 1 divalent metal cation per subunit.</text>
</comment>
<comment type="subcellular location">
    <subcellularLocation>
        <location evidence="1">Cytoplasm</location>
    </subcellularLocation>
</comment>
<comment type="similarity">
    <text evidence="1">Belongs to the SurE nucleotidase family.</text>
</comment>
<accession>B5Z3A6</accession>
<feature type="chain" id="PRO_1000092001" description="5'/3'-nucleotidase SurE">
    <location>
        <begin position="1"/>
        <end position="253"/>
    </location>
</feature>
<feature type="binding site" evidence="1">
    <location>
        <position position="8"/>
    </location>
    <ligand>
        <name>a divalent metal cation</name>
        <dbReference type="ChEBI" id="CHEBI:60240"/>
    </ligand>
</feature>
<feature type="binding site" evidence="1">
    <location>
        <position position="9"/>
    </location>
    <ligand>
        <name>a divalent metal cation</name>
        <dbReference type="ChEBI" id="CHEBI:60240"/>
    </ligand>
</feature>
<feature type="binding site" evidence="1">
    <location>
        <position position="39"/>
    </location>
    <ligand>
        <name>a divalent metal cation</name>
        <dbReference type="ChEBI" id="CHEBI:60240"/>
    </ligand>
</feature>
<feature type="binding site" evidence="1">
    <location>
        <position position="92"/>
    </location>
    <ligand>
        <name>a divalent metal cation</name>
        <dbReference type="ChEBI" id="CHEBI:60240"/>
    </ligand>
</feature>
<proteinExistence type="inferred from homology"/>
<gene>
    <name evidence="1" type="primary">surE</name>
    <name type="ordered locus">ECH74115_3995</name>
</gene>
<name>SURE_ECO5E</name>
<keyword id="KW-0963">Cytoplasm</keyword>
<keyword id="KW-0378">Hydrolase</keyword>
<keyword id="KW-0479">Metal-binding</keyword>
<keyword id="KW-0547">Nucleotide-binding</keyword>
<evidence type="ECO:0000255" key="1">
    <source>
        <dbReference type="HAMAP-Rule" id="MF_00060"/>
    </source>
</evidence>